<comment type="function">
    <text evidence="1">An aminoacyl-tRNA editing enzyme that deacylates mischarged D-aminoacyl-tRNAs. Also deacylates mischarged glycyl-tRNA(Ala), protecting cells against glycine mischarging by AlaRS. Acts via tRNA-based rather than protein-based catalysis; rejects L-amino acids rather than detecting D-amino acids in the active site. By recycling D-aminoacyl-tRNA to D-amino acids and free tRNA molecules, this enzyme counteracts the toxicity associated with the formation of D-aminoacyl-tRNA entities in vivo and helps enforce protein L-homochirality.</text>
</comment>
<comment type="catalytic activity">
    <reaction evidence="1">
        <text>glycyl-tRNA(Ala) + H2O = tRNA(Ala) + glycine + H(+)</text>
        <dbReference type="Rhea" id="RHEA:53744"/>
        <dbReference type="Rhea" id="RHEA-COMP:9657"/>
        <dbReference type="Rhea" id="RHEA-COMP:13640"/>
        <dbReference type="ChEBI" id="CHEBI:15377"/>
        <dbReference type="ChEBI" id="CHEBI:15378"/>
        <dbReference type="ChEBI" id="CHEBI:57305"/>
        <dbReference type="ChEBI" id="CHEBI:78442"/>
        <dbReference type="ChEBI" id="CHEBI:78522"/>
        <dbReference type="EC" id="3.1.1.96"/>
    </reaction>
</comment>
<comment type="catalytic activity">
    <reaction evidence="1">
        <text>a D-aminoacyl-tRNA + H2O = a tRNA + a D-alpha-amino acid + H(+)</text>
        <dbReference type="Rhea" id="RHEA:13953"/>
        <dbReference type="Rhea" id="RHEA-COMP:10123"/>
        <dbReference type="Rhea" id="RHEA-COMP:10124"/>
        <dbReference type="ChEBI" id="CHEBI:15377"/>
        <dbReference type="ChEBI" id="CHEBI:15378"/>
        <dbReference type="ChEBI" id="CHEBI:59871"/>
        <dbReference type="ChEBI" id="CHEBI:78442"/>
        <dbReference type="ChEBI" id="CHEBI:79333"/>
        <dbReference type="EC" id="3.1.1.96"/>
    </reaction>
</comment>
<comment type="subunit">
    <text evidence="1">Homodimer.</text>
</comment>
<comment type="subcellular location">
    <subcellularLocation>
        <location evidence="1">Cytoplasm</location>
    </subcellularLocation>
</comment>
<comment type="domain">
    <text evidence="1">A Gly-cisPro motif from one monomer fits into the active site of the other monomer to allow specific chiral rejection of L-amino acids.</text>
</comment>
<comment type="similarity">
    <text evidence="1">Belongs to the DTD family.</text>
</comment>
<proteinExistence type="inferred from homology"/>
<reference key="1">
    <citation type="journal article" date="2009" name="Genome Res.">
        <title>Complete genome of the cellulolytic thermophile Acidothermus cellulolyticus 11B provides insights into its ecophysiological and evolutionary adaptations.</title>
        <authorList>
            <person name="Barabote R.D."/>
            <person name="Xie G."/>
            <person name="Leu D.H."/>
            <person name="Normand P."/>
            <person name="Necsulea A."/>
            <person name="Daubin V."/>
            <person name="Medigue C."/>
            <person name="Adney W.S."/>
            <person name="Xu X.C."/>
            <person name="Lapidus A."/>
            <person name="Parales R.E."/>
            <person name="Detter C."/>
            <person name="Pujic P."/>
            <person name="Bruce D."/>
            <person name="Lavire C."/>
            <person name="Challacombe J.F."/>
            <person name="Brettin T.S."/>
            <person name="Berry A.M."/>
        </authorList>
    </citation>
    <scope>NUCLEOTIDE SEQUENCE [LARGE SCALE GENOMIC DNA]</scope>
    <source>
        <strain>ATCC 43068 / DSM 8971 / 11B</strain>
    </source>
</reference>
<sequence>MRAVVQRVTNARVTVSGRTVGQITRPGLVVLVGVTHTDTVRQAHALAVKVHELRILRGELSCAQTGAPILVVSQFTLYGDTRKGRRPSWDAAAPAATAEPLIEAFVAELRRRGAEVATGVFGADMLVELANDGPVTLVLDVD</sequence>
<organism>
    <name type="scientific">Acidothermus cellulolyticus (strain ATCC 43068 / DSM 8971 / 11B)</name>
    <dbReference type="NCBI Taxonomy" id="351607"/>
    <lineage>
        <taxon>Bacteria</taxon>
        <taxon>Bacillati</taxon>
        <taxon>Actinomycetota</taxon>
        <taxon>Actinomycetes</taxon>
        <taxon>Acidothermales</taxon>
        <taxon>Acidothermaceae</taxon>
        <taxon>Acidothermus</taxon>
    </lineage>
</organism>
<keyword id="KW-0963">Cytoplasm</keyword>
<keyword id="KW-0378">Hydrolase</keyword>
<keyword id="KW-1185">Reference proteome</keyword>
<keyword id="KW-0694">RNA-binding</keyword>
<keyword id="KW-0820">tRNA-binding</keyword>
<name>DTD_ACIC1</name>
<accession>A0LQX9</accession>
<protein>
    <recommendedName>
        <fullName evidence="1">D-aminoacyl-tRNA deacylase</fullName>
        <shortName evidence="1">DTD</shortName>
        <ecNumber evidence="1">3.1.1.96</ecNumber>
    </recommendedName>
    <alternativeName>
        <fullName evidence="1">Gly-tRNA(Ala) deacylase</fullName>
    </alternativeName>
</protein>
<evidence type="ECO:0000255" key="1">
    <source>
        <dbReference type="HAMAP-Rule" id="MF_00518"/>
    </source>
</evidence>
<feature type="chain" id="PRO_1000050805" description="D-aminoacyl-tRNA deacylase">
    <location>
        <begin position="1"/>
        <end position="142"/>
    </location>
</feature>
<feature type="short sequence motif" description="Gly-cisPro motif, important for rejection of L-amino acids" evidence="1">
    <location>
        <begin position="133"/>
        <end position="134"/>
    </location>
</feature>
<gene>
    <name evidence="1" type="primary">dtd</name>
    <name type="ordered locus">Acel_0063</name>
</gene>
<dbReference type="EC" id="3.1.1.96" evidence="1"/>
<dbReference type="EMBL" id="CP000481">
    <property type="protein sequence ID" value="ABK51839.1"/>
    <property type="molecule type" value="Genomic_DNA"/>
</dbReference>
<dbReference type="RefSeq" id="WP_011718903.1">
    <property type="nucleotide sequence ID" value="NC_008578.1"/>
</dbReference>
<dbReference type="SMR" id="A0LQX9"/>
<dbReference type="FunCoup" id="A0LQX9">
    <property type="interactions" value="282"/>
</dbReference>
<dbReference type="STRING" id="351607.Acel_0063"/>
<dbReference type="KEGG" id="ace:Acel_0063"/>
<dbReference type="eggNOG" id="COG1490">
    <property type="taxonomic scope" value="Bacteria"/>
</dbReference>
<dbReference type="HOGENOM" id="CLU_076901_1_2_11"/>
<dbReference type="InParanoid" id="A0LQX9"/>
<dbReference type="OrthoDB" id="9801395at2"/>
<dbReference type="Proteomes" id="UP000008221">
    <property type="component" value="Chromosome"/>
</dbReference>
<dbReference type="GO" id="GO:0005737">
    <property type="term" value="C:cytoplasm"/>
    <property type="evidence" value="ECO:0007669"/>
    <property type="project" value="UniProtKB-SubCell"/>
</dbReference>
<dbReference type="GO" id="GO:0051500">
    <property type="term" value="F:D-tyrosyl-tRNA(Tyr) deacylase activity"/>
    <property type="evidence" value="ECO:0007669"/>
    <property type="project" value="TreeGrafter"/>
</dbReference>
<dbReference type="GO" id="GO:0106026">
    <property type="term" value="F:Gly-tRNA(Ala) deacylase activity"/>
    <property type="evidence" value="ECO:0007669"/>
    <property type="project" value="UniProtKB-UniRule"/>
</dbReference>
<dbReference type="GO" id="GO:0043908">
    <property type="term" value="F:Ser(Gly)-tRNA(Ala) hydrolase activity"/>
    <property type="evidence" value="ECO:0007669"/>
    <property type="project" value="UniProtKB-UniRule"/>
</dbReference>
<dbReference type="GO" id="GO:0000049">
    <property type="term" value="F:tRNA binding"/>
    <property type="evidence" value="ECO:0007669"/>
    <property type="project" value="UniProtKB-UniRule"/>
</dbReference>
<dbReference type="GO" id="GO:0019478">
    <property type="term" value="P:D-amino acid catabolic process"/>
    <property type="evidence" value="ECO:0007669"/>
    <property type="project" value="UniProtKB-UniRule"/>
</dbReference>
<dbReference type="FunFam" id="3.50.80.10:FF:000001">
    <property type="entry name" value="D-aminoacyl-tRNA deacylase"/>
    <property type="match status" value="1"/>
</dbReference>
<dbReference type="Gene3D" id="3.50.80.10">
    <property type="entry name" value="D-tyrosyl-tRNA(Tyr) deacylase"/>
    <property type="match status" value="1"/>
</dbReference>
<dbReference type="HAMAP" id="MF_00518">
    <property type="entry name" value="Deacylase_Dtd"/>
    <property type="match status" value="1"/>
</dbReference>
<dbReference type="InterPro" id="IPR003732">
    <property type="entry name" value="Daa-tRNA_deacyls_DTD"/>
</dbReference>
<dbReference type="InterPro" id="IPR023509">
    <property type="entry name" value="DTD-like_sf"/>
</dbReference>
<dbReference type="NCBIfam" id="TIGR00256">
    <property type="entry name" value="D-aminoacyl-tRNA deacylase"/>
    <property type="match status" value="1"/>
</dbReference>
<dbReference type="PANTHER" id="PTHR10472:SF5">
    <property type="entry name" value="D-AMINOACYL-TRNA DEACYLASE 1"/>
    <property type="match status" value="1"/>
</dbReference>
<dbReference type="PANTHER" id="PTHR10472">
    <property type="entry name" value="D-TYROSYL-TRNA TYR DEACYLASE"/>
    <property type="match status" value="1"/>
</dbReference>
<dbReference type="Pfam" id="PF02580">
    <property type="entry name" value="Tyr_Deacylase"/>
    <property type="match status" value="1"/>
</dbReference>
<dbReference type="SUPFAM" id="SSF69500">
    <property type="entry name" value="DTD-like"/>
    <property type="match status" value="1"/>
</dbReference>